<sequence>MLKPLENRVVLRVKEEEEKSMGGIVLTSASQEKPQTAEVVAVGEGKTNHHGTLISPLVKVGDTVIFEKFAGTTVKMDGEEFLILKDSDLLAIVE</sequence>
<comment type="function">
    <text evidence="1">Together with the chaperonin GroEL, plays an essential role in assisting protein folding. The GroEL-GroES system forms a nano-cage that allows encapsulation of the non-native substrate proteins and provides a physical environment optimized to promote and accelerate protein folding. GroES binds to the apical surface of the GroEL ring, thereby capping the opening of the GroEL channel.</text>
</comment>
<comment type="subunit">
    <text evidence="1">Heptamer of 7 subunits arranged in a ring. Interacts with the chaperonin GroEL.</text>
</comment>
<comment type="subcellular location">
    <subcellularLocation>
        <location evidence="1">Cytoplasm</location>
    </subcellularLocation>
</comment>
<comment type="similarity">
    <text evidence="1 2">Belongs to the GroES chaperonin family.</text>
</comment>
<name>CH10_LACLA</name>
<evidence type="ECO:0000255" key="1">
    <source>
        <dbReference type="HAMAP-Rule" id="MF_00580"/>
    </source>
</evidence>
<evidence type="ECO:0000305" key="2"/>
<proteinExistence type="inferred from homology"/>
<dbReference type="EMBL" id="X71132">
    <property type="protein sequence ID" value="CAA50445.1"/>
    <property type="molecule type" value="Genomic_DNA"/>
</dbReference>
<dbReference type="EMBL" id="AE005176">
    <property type="protein sequence ID" value="AAK04491.1"/>
    <property type="molecule type" value="Genomic_DNA"/>
</dbReference>
<dbReference type="PIR" id="JN0660">
    <property type="entry name" value="JN0660"/>
</dbReference>
<dbReference type="PIR" id="S32105">
    <property type="entry name" value="S32105"/>
</dbReference>
<dbReference type="RefSeq" id="NP_266549.1">
    <property type="nucleotide sequence ID" value="NC_002662.1"/>
</dbReference>
<dbReference type="RefSeq" id="WP_003131589.1">
    <property type="nucleotide sequence ID" value="NC_002662.1"/>
</dbReference>
<dbReference type="SMR" id="P37283"/>
<dbReference type="PaxDb" id="272623-L198515"/>
<dbReference type="EnsemblBacteria" id="AAK04491">
    <property type="protein sequence ID" value="AAK04491"/>
    <property type="gene ID" value="L198515"/>
</dbReference>
<dbReference type="GeneID" id="89632567"/>
<dbReference type="KEGG" id="lla:L198515"/>
<dbReference type="PATRIC" id="fig|272623.7.peg.427"/>
<dbReference type="eggNOG" id="COG0234">
    <property type="taxonomic scope" value="Bacteria"/>
</dbReference>
<dbReference type="HOGENOM" id="CLU_132825_2_1_9"/>
<dbReference type="OrthoDB" id="9806791at2"/>
<dbReference type="Proteomes" id="UP000002196">
    <property type="component" value="Chromosome"/>
</dbReference>
<dbReference type="GO" id="GO:0005737">
    <property type="term" value="C:cytoplasm"/>
    <property type="evidence" value="ECO:0007669"/>
    <property type="project" value="UniProtKB-SubCell"/>
</dbReference>
<dbReference type="GO" id="GO:0005524">
    <property type="term" value="F:ATP binding"/>
    <property type="evidence" value="ECO:0007669"/>
    <property type="project" value="InterPro"/>
</dbReference>
<dbReference type="GO" id="GO:0046872">
    <property type="term" value="F:metal ion binding"/>
    <property type="evidence" value="ECO:0007669"/>
    <property type="project" value="TreeGrafter"/>
</dbReference>
<dbReference type="GO" id="GO:0044183">
    <property type="term" value="F:protein folding chaperone"/>
    <property type="evidence" value="ECO:0007669"/>
    <property type="project" value="InterPro"/>
</dbReference>
<dbReference type="GO" id="GO:0051087">
    <property type="term" value="F:protein-folding chaperone binding"/>
    <property type="evidence" value="ECO:0007669"/>
    <property type="project" value="TreeGrafter"/>
</dbReference>
<dbReference type="GO" id="GO:0051082">
    <property type="term" value="F:unfolded protein binding"/>
    <property type="evidence" value="ECO:0007669"/>
    <property type="project" value="TreeGrafter"/>
</dbReference>
<dbReference type="GO" id="GO:0051085">
    <property type="term" value="P:chaperone cofactor-dependent protein refolding"/>
    <property type="evidence" value="ECO:0007669"/>
    <property type="project" value="TreeGrafter"/>
</dbReference>
<dbReference type="CDD" id="cd00320">
    <property type="entry name" value="cpn10"/>
    <property type="match status" value="1"/>
</dbReference>
<dbReference type="FunFam" id="2.30.33.40:FF:000001">
    <property type="entry name" value="10 kDa chaperonin"/>
    <property type="match status" value="1"/>
</dbReference>
<dbReference type="Gene3D" id="2.30.33.40">
    <property type="entry name" value="GroES chaperonin"/>
    <property type="match status" value="1"/>
</dbReference>
<dbReference type="HAMAP" id="MF_00580">
    <property type="entry name" value="CH10"/>
    <property type="match status" value="1"/>
</dbReference>
<dbReference type="InterPro" id="IPR020818">
    <property type="entry name" value="Chaperonin_GroES"/>
</dbReference>
<dbReference type="InterPro" id="IPR037124">
    <property type="entry name" value="Chaperonin_GroES_sf"/>
</dbReference>
<dbReference type="InterPro" id="IPR018369">
    <property type="entry name" value="Chaprnonin_Cpn10_CS"/>
</dbReference>
<dbReference type="InterPro" id="IPR011032">
    <property type="entry name" value="GroES-like_sf"/>
</dbReference>
<dbReference type="NCBIfam" id="NF001531">
    <property type="entry name" value="PRK00364.2-2"/>
    <property type="match status" value="1"/>
</dbReference>
<dbReference type="NCBIfam" id="NF001533">
    <property type="entry name" value="PRK00364.2-4"/>
    <property type="match status" value="1"/>
</dbReference>
<dbReference type="NCBIfam" id="NF001534">
    <property type="entry name" value="PRK00364.2-5"/>
    <property type="match status" value="1"/>
</dbReference>
<dbReference type="PANTHER" id="PTHR10772">
    <property type="entry name" value="10 KDA HEAT SHOCK PROTEIN"/>
    <property type="match status" value="1"/>
</dbReference>
<dbReference type="PANTHER" id="PTHR10772:SF58">
    <property type="entry name" value="CO-CHAPERONIN GROES"/>
    <property type="match status" value="1"/>
</dbReference>
<dbReference type="Pfam" id="PF00166">
    <property type="entry name" value="Cpn10"/>
    <property type="match status" value="1"/>
</dbReference>
<dbReference type="PRINTS" id="PR00297">
    <property type="entry name" value="CHAPERONIN10"/>
</dbReference>
<dbReference type="SMART" id="SM00883">
    <property type="entry name" value="Cpn10"/>
    <property type="match status" value="1"/>
</dbReference>
<dbReference type="SUPFAM" id="SSF50129">
    <property type="entry name" value="GroES-like"/>
    <property type="match status" value="1"/>
</dbReference>
<dbReference type="PROSITE" id="PS00681">
    <property type="entry name" value="CHAPERONINS_CPN10"/>
    <property type="match status" value="1"/>
</dbReference>
<protein>
    <recommendedName>
        <fullName evidence="1">Co-chaperonin GroES</fullName>
    </recommendedName>
    <alternativeName>
        <fullName evidence="1">10 kDa chaperonin</fullName>
    </alternativeName>
    <alternativeName>
        <fullName evidence="1">Chaperonin-10</fullName>
        <shortName evidence="1">Cpn10</shortName>
    </alternativeName>
</protein>
<accession>P37283</accession>
<gene>
    <name evidence="1" type="primary">groES</name>
    <name evidence="1" type="synonym">groS</name>
    <name type="ordered locus">LL0393</name>
    <name type="ORF">L198515</name>
</gene>
<reference key="1">
    <citation type="journal article" date="1993" name="Gene">
        <title>Cloning and sequencing of the Lactococcus lactis subsp. lactis groESL operon.</title>
        <authorList>
            <person name="Kim S.G."/>
            <person name="Batt C.A."/>
        </authorList>
    </citation>
    <scope>NUCLEOTIDE SEQUENCE [GENOMIC DNA]</scope>
</reference>
<reference key="2">
    <citation type="journal article" date="2001" name="Genome Res.">
        <title>The complete genome sequence of the lactic acid bacterium Lactococcus lactis ssp. lactis IL1403.</title>
        <authorList>
            <person name="Bolotin A."/>
            <person name="Wincker P."/>
            <person name="Mauger S."/>
            <person name="Jaillon O."/>
            <person name="Malarme K."/>
            <person name="Weissenbach J."/>
            <person name="Ehrlich S.D."/>
            <person name="Sorokin A."/>
        </authorList>
    </citation>
    <scope>NUCLEOTIDE SEQUENCE [LARGE SCALE GENOMIC DNA]</scope>
    <source>
        <strain>IL1403</strain>
    </source>
</reference>
<feature type="chain" id="PRO_0000174770" description="Co-chaperonin GroES">
    <location>
        <begin position="1"/>
        <end position="94"/>
    </location>
</feature>
<organism>
    <name type="scientific">Lactococcus lactis subsp. lactis (strain IL1403)</name>
    <name type="common">Streptococcus lactis</name>
    <dbReference type="NCBI Taxonomy" id="272623"/>
    <lineage>
        <taxon>Bacteria</taxon>
        <taxon>Bacillati</taxon>
        <taxon>Bacillota</taxon>
        <taxon>Bacilli</taxon>
        <taxon>Lactobacillales</taxon>
        <taxon>Streptococcaceae</taxon>
        <taxon>Lactococcus</taxon>
    </lineage>
</organism>
<keyword id="KW-0143">Chaperone</keyword>
<keyword id="KW-0963">Cytoplasm</keyword>
<keyword id="KW-1185">Reference proteome</keyword>